<proteinExistence type="evidence at protein level"/>
<evidence type="ECO:0000250" key="1">
    <source>
        <dbReference type="UniProtKB" id="Q0VBF8"/>
    </source>
</evidence>
<evidence type="ECO:0000255" key="2"/>
<evidence type="ECO:0000305" key="3"/>
<evidence type="ECO:0000312" key="4">
    <source>
        <dbReference type="HGNC" id="HGNC:30491"/>
    </source>
</evidence>
<accession>Q69YW2</accession>
<accession>A6NGL2</accession>
<feature type="chain" id="PRO_0000278635" description="Protein stum homolog">
    <location>
        <begin position="1"/>
        <end position="141"/>
    </location>
</feature>
<feature type="transmembrane region" description="Helical" evidence="2">
    <location>
        <begin position="51"/>
        <end position="71"/>
    </location>
</feature>
<feature type="transmembrane region" description="Helical" evidence="2">
    <location>
        <begin position="87"/>
        <end position="107"/>
    </location>
</feature>
<feature type="modified residue" description="Phosphoserine" evidence="1">
    <location>
        <position position="26"/>
    </location>
</feature>
<protein>
    <recommendedName>
        <fullName>Protein stum homolog</fullName>
    </recommendedName>
</protein>
<comment type="interaction">
    <interactant intactId="EBI-22730169">
        <id>Q69YW2</id>
    </interactant>
    <interactant intactId="EBI-10254561">
        <id>Q6UX98</id>
        <label>ZDHHC24</label>
    </interactant>
    <organismsDiffer>false</organismsDiffer>
    <experiments>3</experiments>
</comment>
<comment type="subcellular location">
    <subcellularLocation>
        <location evidence="3">Membrane</location>
        <topology evidence="3">Multi-pass membrane protein</topology>
    </subcellularLocation>
</comment>
<comment type="similarity">
    <text evidence="3">Belongs to the SPEC3 family. Stum subfamily.</text>
</comment>
<keyword id="KW-0472">Membrane</keyword>
<keyword id="KW-0597">Phosphoprotein</keyword>
<keyword id="KW-1267">Proteomics identification</keyword>
<keyword id="KW-1185">Reference proteome</keyword>
<keyword id="KW-0812">Transmembrane</keyword>
<keyword id="KW-1133">Transmembrane helix</keyword>
<reference key="1">
    <citation type="journal article" date="2007" name="BMC Genomics">
        <title>The full-ORF clone resource of the German cDNA consortium.</title>
        <authorList>
            <person name="Bechtel S."/>
            <person name="Rosenfelder H."/>
            <person name="Duda A."/>
            <person name="Schmidt C.P."/>
            <person name="Ernst U."/>
            <person name="Wellenreuther R."/>
            <person name="Mehrle A."/>
            <person name="Schuster C."/>
            <person name="Bahr A."/>
            <person name="Bloecker H."/>
            <person name="Heubner D."/>
            <person name="Hoerlein A."/>
            <person name="Michel G."/>
            <person name="Wedler H."/>
            <person name="Koehrer K."/>
            <person name="Ottenwaelder B."/>
            <person name="Poustka A."/>
            <person name="Wiemann S."/>
            <person name="Schupp I."/>
        </authorList>
    </citation>
    <scope>NUCLEOTIDE SEQUENCE [LARGE SCALE MRNA]</scope>
    <source>
        <tissue>Amygdala</tissue>
    </source>
</reference>
<reference key="2">
    <citation type="journal article" date="2006" name="Nature">
        <title>The DNA sequence and biological annotation of human chromosome 1.</title>
        <authorList>
            <person name="Gregory S.G."/>
            <person name="Barlow K.F."/>
            <person name="McLay K.E."/>
            <person name="Kaul R."/>
            <person name="Swarbreck D."/>
            <person name="Dunham A."/>
            <person name="Scott C.E."/>
            <person name="Howe K.L."/>
            <person name="Woodfine K."/>
            <person name="Spencer C.C.A."/>
            <person name="Jones M.C."/>
            <person name="Gillson C."/>
            <person name="Searle S."/>
            <person name="Zhou Y."/>
            <person name="Kokocinski F."/>
            <person name="McDonald L."/>
            <person name="Evans R."/>
            <person name="Phillips K."/>
            <person name="Atkinson A."/>
            <person name="Cooper R."/>
            <person name="Jones C."/>
            <person name="Hall R.E."/>
            <person name="Andrews T.D."/>
            <person name="Lloyd C."/>
            <person name="Ainscough R."/>
            <person name="Almeida J.P."/>
            <person name="Ambrose K.D."/>
            <person name="Anderson F."/>
            <person name="Andrew R.W."/>
            <person name="Ashwell R.I.S."/>
            <person name="Aubin K."/>
            <person name="Babbage A.K."/>
            <person name="Bagguley C.L."/>
            <person name="Bailey J."/>
            <person name="Beasley H."/>
            <person name="Bethel G."/>
            <person name="Bird C.P."/>
            <person name="Bray-Allen S."/>
            <person name="Brown J.Y."/>
            <person name="Brown A.J."/>
            <person name="Buckley D."/>
            <person name="Burton J."/>
            <person name="Bye J."/>
            <person name="Carder C."/>
            <person name="Chapman J.C."/>
            <person name="Clark S.Y."/>
            <person name="Clarke G."/>
            <person name="Clee C."/>
            <person name="Cobley V."/>
            <person name="Collier R.E."/>
            <person name="Corby N."/>
            <person name="Coville G.J."/>
            <person name="Davies J."/>
            <person name="Deadman R."/>
            <person name="Dunn M."/>
            <person name="Earthrowl M."/>
            <person name="Ellington A.G."/>
            <person name="Errington H."/>
            <person name="Frankish A."/>
            <person name="Frankland J."/>
            <person name="French L."/>
            <person name="Garner P."/>
            <person name="Garnett J."/>
            <person name="Gay L."/>
            <person name="Ghori M.R.J."/>
            <person name="Gibson R."/>
            <person name="Gilby L.M."/>
            <person name="Gillett W."/>
            <person name="Glithero R.J."/>
            <person name="Grafham D.V."/>
            <person name="Griffiths C."/>
            <person name="Griffiths-Jones S."/>
            <person name="Grocock R."/>
            <person name="Hammond S."/>
            <person name="Harrison E.S.I."/>
            <person name="Hart E."/>
            <person name="Haugen E."/>
            <person name="Heath P.D."/>
            <person name="Holmes S."/>
            <person name="Holt K."/>
            <person name="Howden P.J."/>
            <person name="Hunt A.R."/>
            <person name="Hunt S.E."/>
            <person name="Hunter G."/>
            <person name="Isherwood J."/>
            <person name="James R."/>
            <person name="Johnson C."/>
            <person name="Johnson D."/>
            <person name="Joy A."/>
            <person name="Kay M."/>
            <person name="Kershaw J.K."/>
            <person name="Kibukawa M."/>
            <person name="Kimberley A.M."/>
            <person name="King A."/>
            <person name="Knights A.J."/>
            <person name="Lad H."/>
            <person name="Laird G."/>
            <person name="Lawlor S."/>
            <person name="Leongamornlert D.A."/>
            <person name="Lloyd D.M."/>
            <person name="Loveland J."/>
            <person name="Lovell J."/>
            <person name="Lush M.J."/>
            <person name="Lyne R."/>
            <person name="Martin S."/>
            <person name="Mashreghi-Mohammadi M."/>
            <person name="Matthews L."/>
            <person name="Matthews N.S.W."/>
            <person name="McLaren S."/>
            <person name="Milne S."/>
            <person name="Mistry S."/>
            <person name="Moore M.J.F."/>
            <person name="Nickerson T."/>
            <person name="O'Dell C.N."/>
            <person name="Oliver K."/>
            <person name="Palmeiri A."/>
            <person name="Palmer S.A."/>
            <person name="Parker A."/>
            <person name="Patel D."/>
            <person name="Pearce A.V."/>
            <person name="Peck A.I."/>
            <person name="Pelan S."/>
            <person name="Phelps K."/>
            <person name="Phillimore B.J."/>
            <person name="Plumb R."/>
            <person name="Rajan J."/>
            <person name="Raymond C."/>
            <person name="Rouse G."/>
            <person name="Saenphimmachak C."/>
            <person name="Sehra H.K."/>
            <person name="Sheridan E."/>
            <person name="Shownkeen R."/>
            <person name="Sims S."/>
            <person name="Skuce C.D."/>
            <person name="Smith M."/>
            <person name="Steward C."/>
            <person name="Subramanian S."/>
            <person name="Sycamore N."/>
            <person name="Tracey A."/>
            <person name="Tromans A."/>
            <person name="Van Helmond Z."/>
            <person name="Wall M."/>
            <person name="Wallis J.M."/>
            <person name="White S."/>
            <person name="Whitehead S.L."/>
            <person name="Wilkinson J.E."/>
            <person name="Willey D.L."/>
            <person name="Williams H."/>
            <person name="Wilming L."/>
            <person name="Wray P.W."/>
            <person name="Wu Z."/>
            <person name="Coulson A."/>
            <person name="Vaudin M."/>
            <person name="Sulston J.E."/>
            <person name="Durbin R.M."/>
            <person name="Hubbard T."/>
            <person name="Wooster R."/>
            <person name="Dunham I."/>
            <person name="Carter N.P."/>
            <person name="McVean G."/>
            <person name="Ross M.T."/>
            <person name="Harrow J."/>
            <person name="Olson M.V."/>
            <person name="Beck S."/>
            <person name="Rogers J."/>
            <person name="Bentley D.R."/>
        </authorList>
    </citation>
    <scope>NUCLEOTIDE SEQUENCE [LARGE SCALE GENOMIC DNA]</scope>
</reference>
<gene>
    <name evidence="4" type="primary">STUM</name>
    <name evidence="4" type="synonym">C1orf95</name>
</gene>
<dbReference type="EMBL" id="AL137507">
    <property type="protein sequence ID" value="CAH10697.1"/>
    <property type="molecule type" value="mRNA"/>
</dbReference>
<dbReference type="EMBL" id="AL359704">
    <property type="status" value="NOT_ANNOTATED_CDS"/>
    <property type="molecule type" value="Genomic_DNA"/>
</dbReference>
<dbReference type="EMBL" id="AL357122">
    <property type="status" value="NOT_ANNOTATED_CDS"/>
    <property type="molecule type" value="Genomic_DNA"/>
</dbReference>
<dbReference type="EMBL" id="AL365444">
    <property type="status" value="NOT_ANNOTATED_CDS"/>
    <property type="molecule type" value="Genomic_DNA"/>
</dbReference>
<dbReference type="CCDS" id="CCDS31044.1"/>
<dbReference type="RefSeq" id="NP_001003665.1">
    <property type="nucleotide sequence ID" value="NM_001003665.4"/>
</dbReference>
<dbReference type="SMR" id="Q69YW2"/>
<dbReference type="BioGRID" id="131953">
    <property type="interactions" value="19"/>
</dbReference>
<dbReference type="FunCoup" id="Q69YW2">
    <property type="interactions" value="13"/>
</dbReference>
<dbReference type="IntAct" id="Q69YW2">
    <property type="interactions" value="20"/>
</dbReference>
<dbReference type="STRING" id="9606.ENSP00000355752"/>
<dbReference type="PhosphoSitePlus" id="Q69YW2"/>
<dbReference type="SwissPalm" id="Q69YW2"/>
<dbReference type="BioMuta" id="STUM"/>
<dbReference type="DMDM" id="74748348"/>
<dbReference type="MassIVE" id="Q69YW2"/>
<dbReference type="PaxDb" id="9606-ENSP00000355752"/>
<dbReference type="PeptideAtlas" id="Q69YW2"/>
<dbReference type="ProteomicsDB" id="66172"/>
<dbReference type="Antibodypedia" id="34651">
    <property type="antibodies" value="103 antibodies from 19 providers"/>
</dbReference>
<dbReference type="DNASU" id="375057"/>
<dbReference type="Ensembl" id="ENST00000366788.8">
    <property type="protein sequence ID" value="ENSP00000355752.3"/>
    <property type="gene ID" value="ENSG00000203685.11"/>
</dbReference>
<dbReference type="GeneID" id="375057"/>
<dbReference type="KEGG" id="hsa:375057"/>
<dbReference type="MANE-Select" id="ENST00000366788.8">
    <property type="protein sequence ID" value="ENSP00000355752.3"/>
    <property type="RefSeq nucleotide sequence ID" value="NM_001003665.4"/>
    <property type="RefSeq protein sequence ID" value="NP_001003665.1"/>
</dbReference>
<dbReference type="UCSC" id="uc057pyu.1">
    <property type="organism name" value="human"/>
</dbReference>
<dbReference type="AGR" id="HGNC:30491"/>
<dbReference type="CTD" id="375057"/>
<dbReference type="DisGeNET" id="375057"/>
<dbReference type="GeneCards" id="STUM"/>
<dbReference type="HGNC" id="HGNC:30491">
    <property type="gene designation" value="STUM"/>
</dbReference>
<dbReference type="HPA" id="ENSG00000203685">
    <property type="expression patterns" value="Group enriched (brain, intestine)"/>
</dbReference>
<dbReference type="neXtProt" id="NX_Q69YW2"/>
<dbReference type="OpenTargets" id="ENSG00000203685"/>
<dbReference type="PharmGKB" id="PA142672479"/>
<dbReference type="VEuPathDB" id="HostDB:ENSG00000203685"/>
<dbReference type="eggNOG" id="ENOG502S270">
    <property type="taxonomic scope" value="Eukaryota"/>
</dbReference>
<dbReference type="GeneTree" id="ENSGT00390000008003"/>
<dbReference type="HOGENOM" id="CLU_139845_0_0_1"/>
<dbReference type="InParanoid" id="Q69YW2"/>
<dbReference type="OrthoDB" id="361532at2759"/>
<dbReference type="PAN-GO" id="Q69YW2">
    <property type="GO annotations" value="0 GO annotations based on evolutionary models"/>
</dbReference>
<dbReference type="PhylomeDB" id="Q69YW2"/>
<dbReference type="TreeFam" id="TF313260"/>
<dbReference type="PathwayCommons" id="Q69YW2"/>
<dbReference type="SignaLink" id="Q69YW2"/>
<dbReference type="BioGRID-ORCS" id="375057">
    <property type="hits" value="7 hits in 1120 CRISPR screens"/>
</dbReference>
<dbReference type="CD-CODE" id="FB4E32DD">
    <property type="entry name" value="Presynaptic clusters and postsynaptic densities"/>
</dbReference>
<dbReference type="ChiTaRS" id="STUM">
    <property type="organism name" value="human"/>
</dbReference>
<dbReference type="GenomeRNAi" id="375057"/>
<dbReference type="Pharos" id="Q69YW2">
    <property type="development level" value="Tbio"/>
</dbReference>
<dbReference type="PRO" id="PR:Q69YW2"/>
<dbReference type="Proteomes" id="UP000005640">
    <property type="component" value="Chromosome 1"/>
</dbReference>
<dbReference type="RNAct" id="Q69YW2">
    <property type="molecule type" value="protein"/>
</dbReference>
<dbReference type="Bgee" id="ENSG00000203685">
    <property type="expression patterns" value="Expressed in lateral nuclear group of thalamus and 152 other cell types or tissues"/>
</dbReference>
<dbReference type="ExpressionAtlas" id="Q69YW2">
    <property type="expression patterns" value="baseline and differential"/>
</dbReference>
<dbReference type="GO" id="GO:0016020">
    <property type="term" value="C:membrane"/>
    <property type="evidence" value="ECO:0007669"/>
    <property type="project" value="UniProtKB-SubCell"/>
</dbReference>
<dbReference type="InterPro" id="IPR026673">
    <property type="entry name" value="SPEC3/Stum"/>
</dbReference>
<dbReference type="PANTHER" id="PTHR21676">
    <property type="entry name" value="PROTEIN STUM"/>
    <property type="match status" value="1"/>
</dbReference>
<dbReference type="PANTHER" id="PTHR21676:SF1">
    <property type="entry name" value="PROTEIN STUM HOMOLOG"/>
    <property type="match status" value="1"/>
</dbReference>
<dbReference type="Pfam" id="PF15795">
    <property type="entry name" value="Spec3"/>
    <property type="match status" value="1"/>
</dbReference>
<sequence>MEPSHKDAETAAAAAAVAAADPRGASSSSGVVVQVREKKGPLRAAIPYMPFPVAVICLFLNTFVPGLGTFVSAFTVLCGARTDLPDRHVCCVFWLNIAAALIQILTAIVMVGWIMSIFWGMDMVILAISQGYKEQGIPQQL</sequence>
<name>STUM_HUMAN</name>
<organism>
    <name type="scientific">Homo sapiens</name>
    <name type="common">Human</name>
    <dbReference type="NCBI Taxonomy" id="9606"/>
    <lineage>
        <taxon>Eukaryota</taxon>
        <taxon>Metazoa</taxon>
        <taxon>Chordata</taxon>
        <taxon>Craniata</taxon>
        <taxon>Vertebrata</taxon>
        <taxon>Euteleostomi</taxon>
        <taxon>Mammalia</taxon>
        <taxon>Eutheria</taxon>
        <taxon>Euarchontoglires</taxon>
        <taxon>Primates</taxon>
        <taxon>Haplorrhini</taxon>
        <taxon>Catarrhini</taxon>
        <taxon>Hominidae</taxon>
        <taxon>Homo</taxon>
    </lineage>
</organism>